<protein>
    <recommendedName>
        <fullName>Uncharacterized membrane protein YjbE</fullName>
    </recommendedName>
</protein>
<keyword id="KW-1003">Cell membrane</keyword>
<keyword id="KW-0472">Membrane</keyword>
<keyword id="KW-1185">Reference proteome</keyword>
<keyword id="KW-0812">Transmembrane</keyword>
<keyword id="KW-1133">Transmembrane helix</keyword>
<comment type="subcellular location">
    <subcellularLocation>
        <location evidence="2">Cell membrane</location>
        <topology evidence="2">Multi-pass membrane protein</topology>
    </subcellularLocation>
</comment>
<comment type="similarity">
    <text evidence="2">Belongs to the TerC family.</text>
</comment>
<feature type="chain" id="PRO_0000377719" description="Uncharacterized membrane protein YjbE">
    <location>
        <begin position="1"/>
        <end position="218"/>
    </location>
</feature>
<feature type="transmembrane region" description="Helical" evidence="1">
    <location>
        <begin position="9"/>
        <end position="29"/>
    </location>
</feature>
<feature type="transmembrane region" description="Helical" evidence="1">
    <location>
        <begin position="42"/>
        <end position="62"/>
    </location>
</feature>
<feature type="transmembrane region" description="Helical" evidence="1">
    <location>
        <begin position="67"/>
        <end position="87"/>
    </location>
</feature>
<feature type="transmembrane region" description="Helical" evidence="1">
    <location>
        <begin position="107"/>
        <end position="127"/>
    </location>
</feature>
<feature type="transmembrane region" description="Helical" evidence="1">
    <location>
        <begin position="134"/>
        <end position="154"/>
    </location>
</feature>
<feature type="transmembrane region" description="Helical" evidence="1">
    <location>
        <begin position="159"/>
        <end position="179"/>
    </location>
</feature>
<feature type="transmembrane region" description="Helical" evidence="1">
    <location>
        <begin position="192"/>
        <end position="212"/>
    </location>
</feature>
<proteinExistence type="inferred from homology"/>
<name>YJBE_BACSU</name>
<gene>
    <name type="primary">yjbE</name>
    <name type="ordered locus">BSU11510</name>
</gene>
<accession>O31603</accession>
<evidence type="ECO:0000255" key="1"/>
<evidence type="ECO:0000305" key="2"/>
<dbReference type="EMBL" id="AL009126">
    <property type="protein sequence ID" value="CAB13008.1"/>
    <property type="molecule type" value="Genomic_DNA"/>
</dbReference>
<dbReference type="PIR" id="E69843">
    <property type="entry name" value="E69843"/>
</dbReference>
<dbReference type="RefSeq" id="NP_389033.1">
    <property type="nucleotide sequence ID" value="NC_000964.3"/>
</dbReference>
<dbReference type="RefSeq" id="WP_003232944.1">
    <property type="nucleotide sequence ID" value="NZ_OZ025638.1"/>
</dbReference>
<dbReference type="FunCoup" id="O31603">
    <property type="interactions" value="1"/>
</dbReference>
<dbReference type="STRING" id="224308.BSU11510"/>
<dbReference type="PaxDb" id="224308-BSU11510"/>
<dbReference type="EnsemblBacteria" id="CAB13008">
    <property type="protein sequence ID" value="CAB13008"/>
    <property type="gene ID" value="BSU_11510"/>
</dbReference>
<dbReference type="GeneID" id="939805"/>
<dbReference type="KEGG" id="bsu:BSU11510"/>
<dbReference type="PATRIC" id="fig|224308.179.peg.1238"/>
<dbReference type="eggNOG" id="COG0861">
    <property type="taxonomic scope" value="Bacteria"/>
</dbReference>
<dbReference type="InParanoid" id="O31603"/>
<dbReference type="OrthoDB" id="5295733at2"/>
<dbReference type="PhylomeDB" id="O31603"/>
<dbReference type="BioCyc" id="BSUB:BSU11510-MONOMER"/>
<dbReference type="Proteomes" id="UP000001570">
    <property type="component" value="Chromosome"/>
</dbReference>
<dbReference type="GO" id="GO:0005886">
    <property type="term" value="C:plasma membrane"/>
    <property type="evidence" value="ECO:0000318"/>
    <property type="project" value="GO_Central"/>
</dbReference>
<dbReference type="InterPro" id="IPR005496">
    <property type="entry name" value="Integral_membrane_TerC"/>
</dbReference>
<dbReference type="InterPro" id="IPR022301">
    <property type="entry name" value="Integral_membrane_YjbE"/>
</dbReference>
<dbReference type="NCBIfam" id="TIGR03717">
    <property type="entry name" value="R_switched_YjbE"/>
    <property type="match status" value="1"/>
</dbReference>
<dbReference type="PANTHER" id="PTHR30238">
    <property type="entry name" value="MEMBRANE BOUND PREDICTED REDOX MODULATOR"/>
    <property type="match status" value="1"/>
</dbReference>
<dbReference type="PANTHER" id="PTHR30238:SF4">
    <property type="entry name" value="SLL1022 PROTEIN"/>
    <property type="match status" value="1"/>
</dbReference>
<dbReference type="Pfam" id="PF03741">
    <property type="entry name" value="TerC"/>
    <property type="match status" value="1"/>
</dbReference>
<reference key="1">
    <citation type="journal article" date="1997" name="Nature">
        <title>The complete genome sequence of the Gram-positive bacterium Bacillus subtilis.</title>
        <authorList>
            <person name="Kunst F."/>
            <person name="Ogasawara N."/>
            <person name="Moszer I."/>
            <person name="Albertini A.M."/>
            <person name="Alloni G."/>
            <person name="Azevedo V."/>
            <person name="Bertero M.G."/>
            <person name="Bessieres P."/>
            <person name="Bolotin A."/>
            <person name="Borchert S."/>
            <person name="Borriss R."/>
            <person name="Boursier L."/>
            <person name="Brans A."/>
            <person name="Braun M."/>
            <person name="Brignell S.C."/>
            <person name="Bron S."/>
            <person name="Brouillet S."/>
            <person name="Bruschi C.V."/>
            <person name="Caldwell B."/>
            <person name="Capuano V."/>
            <person name="Carter N.M."/>
            <person name="Choi S.-K."/>
            <person name="Codani J.-J."/>
            <person name="Connerton I.F."/>
            <person name="Cummings N.J."/>
            <person name="Daniel R.A."/>
            <person name="Denizot F."/>
            <person name="Devine K.M."/>
            <person name="Duesterhoeft A."/>
            <person name="Ehrlich S.D."/>
            <person name="Emmerson P.T."/>
            <person name="Entian K.-D."/>
            <person name="Errington J."/>
            <person name="Fabret C."/>
            <person name="Ferrari E."/>
            <person name="Foulger D."/>
            <person name="Fritz C."/>
            <person name="Fujita M."/>
            <person name="Fujita Y."/>
            <person name="Fuma S."/>
            <person name="Galizzi A."/>
            <person name="Galleron N."/>
            <person name="Ghim S.-Y."/>
            <person name="Glaser P."/>
            <person name="Goffeau A."/>
            <person name="Golightly E.J."/>
            <person name="Grandi G."/>
            <person name="Guiseppi G."/>
            <person name="Guy B.J."/>
            <person name="Haga K."/>
            <person name="Haiech J."/>
            <person name="Harwood C.R."/>
            <person name="Henaut A."/>
            <person name="Hilbert H."/>
            <person name="Holsappel S."/>
            <person name="Hosono S."/>
            <person name="Hullo M.-F."/>
            <person name="Itaya M."/>
            <person name="Jones L.-M."/>
            <person name="Joris B."/>
            <person name="Karamata D."/>
            <person name="Kasahara Y."/>
            <person name="Klaerr-Blanchard M."/>
            <person name="Klein C."/>
            <person name="Kobayashi Y."/>
            <person name="Koetter P."/>
            <person name="Koningstein G."/>
            <person name="Krogh S."/>
            <person name="Kumano M."/>
            <person name="Kurita K."/>
            <person name="Lapidus A."/>
            <person name="Lardinois S."/>
            <person name="Lauber J."/>
            <person name="Lazarevic V."/>
            <person name="Lee S.-M."/>
            <person name="Levine A."/>
            <person name="Liu H."/>
            <person name="Masuda S."/>
            <person name="Mauel C."/>
            <person name="Medigue C."/>
            <person name="Medina N."/>
            <person name="Mellado R.P."/>
            <person name="Mizuno M."/>
            <person name="Moestl D."/>
            <person name="Nakai S."/>
            <person name="Noback M."/>
            <person name="Noone D."/>
            <person name="O'Reilly M."/>
            <person name="Ogawa K."/>
            <person name="Ogiwara A."/>
            <person name="Oudega B."/>
            <person name="Park S.-H."/>
            <person name="Parro V."/>
            <person name="Pohl T.M."/>
            <person name="Portetelle D."/>
            <person name="Porwollik S."/>
            <person name="Prescott A.M."/>
            <person name="Presecan E."/>
            <person name="Pujic P."/>
            <person name="Purnelle B."/>
            <person name="Rapoport G."/>
            <person name="Rey M."/>
            <person name="Reynolds S."/>
            <person name="Rieger M."/>
            <person name="Rivolta C."/>
            <person name="Rocha E."/>
            <person name="Roche B."/>
            <person name="Rose M."/>
            <person name="Sadaie Y."/>
            <person name="Sato T."/>
            <person name="Scanlan E."/>
            <person name="Schleich S."/>
            <person name="Schroeter R."/>
            <person name="Scoffone F."/>
            <person name="Sekiguchi J."/>
            <person name="Sekowska A."/>
            <person name="Seror S.J."/>
            <person name="Serror P."/>
            <person name="Shin B.-S."/>
            <person name="Soldo B."/>
            <person name="Sorokin A."/>
            <person name="Tacconi E."/>
            <person name="Takagi T."/>
            <person name="Takahashi H."/>
            <person name="Takemaru K."/>
            <person name="Takeuchi M."/>
            <person name="Tamakoshi A."/>
            <person name="Tanaka T."/>
            <person name="Terpstra P."/>
            <person name="Tognoni A."/>
            <person name="Tosato V."/>
            <person name="Uchiyama S."/>
            <person name="Vandenbol M."/>
            <person name="Vannier F."/>
            <person name="Vassarotti A."/>
            <person name="Viari A."/>
            <person name="Wambutt R."/>
            <person name="Wedler E."/>
            <person name="Wedler H."/>
            <person name="Weitzenegger T."/>
            <person name="Winters P."/>
            <person name="Wipat A."/>
            <person name="Yamamoto H."/>
            <person name="Yamane K."/>
            <person name="Yasumoto K."/>
            <person name="Yata K."/>
            <person name="Yoshida K."/>
            <person name="Yoshikawa H.-F."/>
            <person name="Zumstein E."/>
            <person name="Yoshikawa H."/>
            <person name="Danchin A."/>
        </authorList>
    </citation>
    <scope>NUCLEOTIDE SEQUENCE [LARGE SCALE GENOMIC DNA]</scope>
    <source>
        <strain>168</strain>
    </source>
</reference>
<organism>
    <name type="scientific">Bacillus subtilis (strain 168)</name>
    <dbReference type="NCBI Taxonomy" id="224308"/>
    <lineage>
        <taxon>Bacteria</taxon>
        <taxon>Bacillati</taxon>
        <taxon>Bacillota</taxon>
        <taxon>Bacilli</taxon>
        <taxon>Bacillales</taxon>
        <taxon>Bacillaceae</taxon>
        <taxon>Bacillus</taxon>
    </lineage>
</organism>
<sequence>MEHDYLISLLVIVGIDLILGGDNAVVIAMASRHLPDKQRQQAIILGTFIAVAMRIGLTSAAVYLLNIPFLQCAGGIFLLYLGYQLLIEKKDTKHIKSSTSLWRAIRTIVLADLFMSLDNVIAVAGASHGEFSLVVIGLCVSVPVIIWGSKLIHIALEKIPLLIYAGSGLLAYTGGEMIVRDKKLSLFMAQHGTVETLLPILTVAFVILASIYYQQVEK</sequence>